<gene>
    <name type="primary">yidQ</name>
    <name type="ordered locus">b3688</name>
    <name type="ordered locus">JW5633</name>
</gene>
<organism>
    <name type="scientific">Escherichia coli (strain K12)</name>
    <dbReference type="NCBI Taxonomy" id="83333"/>
    <lineage>
        <taxon>Bacteria</taxon>
        <taxon>Pseudomonadati</taxon>
        <taxon>Pseudomonadota</taxon>
        <taxon>Gammaproteobacteria</taxon>
        <taxon>Enterobacterales</taxon>
        <taxon>Enterobacteriaceae</taxon>
        <taxon>Escherichia</taxon>
    </lineage>
</organism>
<sequence length="110" mass="11826">MIRNVLLAFMICSGMTLLGGCSSVMSHTGGKEGTYPGTRASATMIGDDETNWGTKSLAILDMPFTAVMDTLLLPWDVFRKDSSVRSRVEKSEANAQATNAVIPPARMPDN</sequence>
<protein>
    <recommendedName>
        <fullName>Uncharacterized protein YidQ</fullName>
    </recommendedName>
</protein>
<dbReference type="EMBL" id="L10328">
    <property type="protein sequence ID" value="AAA62040.1"/>
    <property type="status" value="ALT_INIT"/>
    <property type="molecule type" value="Genomic_DNA"/>
</dbReference>
<dbReference type="EMBL" id="U00096">
    <property type="protein sequence ID" value="AAC76711.2"/>
    <property type="molecule type" value="Genomic_DNA"/>
</dbReference>
<dbReference type="EMBL" id="AP009048">
    <property type="protein sequence ID" value="BAE77606.1"/>
    <property type="molecule type" value="Genomic_DNA"/>
</dbReference>
<dbReference type="RefSeq" id="NP_418143.2">
    <property type="nucleotide sequence ID" value="NC_000913.3"/>
</dbReference>
<dbReference type="RefSeq" id="WP_000620888.1">
    <property type="nucleotide sequence ID" value="NZ_STEB01000015.1"/>
</dbReference>
<dbReference type="BioGRID" id="4262575">
    <property type="interactions" value="8"/>
</dbReference>
<dbReference type="FunCoup" id="P0ADM4">
    <property type="interactions" value="44"/>
</dbReference>
<dbReference type="STRING" id="511145.b3688"/>
<dbReference type="jPOST" id="P0ADM4"/>
<dbReference type="PaxDb" id="511145-b3688"/>
<dbReference type="EnsemblBacteria" id="AAC76711">
    <property type="protein sequence ID" value="AAC76711"/>
    <property type="gene ID" value="b3688"/>
</dbReference>
<dbReference type="GeneID" id="948199"/>
<dbReference type="KEGG" id="ecj:JW5633"/>
<dbReference type="KEGG" id="eco:b3688"/>
<dbReference type="KEGG" id="ecoc:C3026_19995"/>
<dbReference type="PATRIC" id="fig|511145.12.peg.3811"/>
<dbReference type="EchoBASE" id="EB1663"/>
<dbReference type="eggNOG" id="COG5645">
    <property type="taxonomic scope" value="Bacteria"/>
</dbReference>
<dbReference type="HOGENOM" id="CLU_129878_0_0_6"/>
<dbReference type="InParanoid" id="P0ADM4"/>
<dbReference type="OMA" id="SSVMTHT"/>
<dbReference type="OrthoDB" id="6504878at2"/>
<dbReference type="PhylomeDB" id="P0ADM4"/>
<dbReference type="BioCyc" id="EcoCyc:EG11712-MONOMER"/>
<dbReference type="PRO" id="PR:P0ADM4"/>
<dbReference type="Proteomes" id="UP000000625">
    <property type="component" value="Chromosome"/>
</dbReference>
<dbReference type="GO" id="GO:0009279">
    <property type="term" value="C:cell outer membrane"/>
    <property type="evidence" value="ECO:0007005"/>
    <property type="project" value="EcoCyc"/>
</dbReference>
<dbReference type="GO" id="GO:0006974">
    <property type="term" value="P:DNA damage response"/>
    <property type="evidence" value="ECO:0000270"/>
    <property type="project" value="EcoliWiki"/>
</dbReference>
<dbReference type="InterPro" id="IPR010780">
    <property type="entry name" value="DUF1375"/>
</dbReference>
<dbReference type="NCBIfam" id="NF008628">
    <property type="entry name" value="PRK11616.1"/>
    <property type="match status" value="1"/>
</dbReference>
<dbReference type="Pfam" id="PF07119">
    <property type="entry name" value="DUF1375"/>
    <property type="match status" value="1"/>
</dbReference>
<dbReference type="PROSITE" id="PS51257">
    <property type="entry name" value="PROKAR_LIPOPROTEIN"/>
    <property type="match status" value="1"/>
</dbReference>
<keyword id="KW-1185">Reference proteome</keyword>
<keyword id="KW-0732">Signal</keyword>
<proteinExistence type="inferred from homology"/>
<name>YIDQ_ECOLI</name>
<accession>P0ADM4</accession>
<accession>P31454</accession>
<accession>Q2M800</accession>
<reference key="1">
    <citation type="journal article" date="1993" name="Genomics">
        <title>DNA sequence and analysis of 136 kilobases of the Escherichia coli genome: organizational symmetry around the origin of replication.</title>
        <authorList>
            <person name="Burland V.D."/>
            <person name="Plunkett G. III"/>
            <person name="Daniels D.L."/>
            <person name="Blattner F.R."/>
        </authorList>
    </citation>
    <scope>NUCLEOTIDE SEQUENCE [LARGE SCALE GENOMIC DNA]</scope>
    <source>
        <strain>K12 / MG1655 / ATCC 47076</strain>
    </source>
</reference>
<reference key="2">
    <citation type="journal article" date="1997" name="Science">
        <title>The complete genome sequence of Escherichia coli K-12.</title>
        <authorList>
            <person name="Blattner F.R."/>
            <person name="Plunkett G. III"/>
            <person name="Bloch C.A."/>
            <person name="Perna N.T."/>
            <person name="Burland V."/>
            <person name="Riley M."/>
            <person name="Collado-Vides J."/>
            <person name="Glasner J.D."/>
            <person name="Rode C.K."/>
            <person name="Mayhew G.F."/>
            <person name="Gregor J."/>
            <person name="Davis N.W."/>
            <person name="Kirkpatrick H.A."/>
            <person name="Goeden M.A."/>
            <person name="Rose D.J."/>
            <person name="Mau B."/>
            <person name="Shao Y."/>
        </authorList>
    </citation>
    <scope>NUCLEOTIDE SEQUENCE [LARGE SCALE GENOMIC DNA]</scope>
    <source>
        <strain>K12 / MG1655 / ATCC 47076</strain>
    </source>
</reference>
<reference key="3">
    <citation type="journal article" date="2006" name="Mol. Syst. Biol.">
        <title>Highly accurate genome sequences of Escherichia coli K-12 strains MG1655 and W3110.</title>
        <authorList>
            <person name="Hayashi K."/>
            <person name="Morooka N."/>
            <person name="Yamamoto Y."/>
            <person name="Fujita K."/>
            <person name="Isono K."/>
            <person name="Choi S."/>
            <person name="Ohtsubo E."/>
            <person name="Baba T."/>
            <person name="Wanner B.L."/>
            <person name="Mori H."/>
            <person name="Horiuchi T."/>
        </authorList>
    </citation>
    <scope>NUCLEOTIDE SEQUENCE [LARGE SCALE GENOMIC DNA]</scope>
    <source>
        <strain>K12 / W3110 / ATCC 27325 / DSM 5911</strain>
    </source>
</reference>
<evidence type="ECO:0000255" key="1">
    <source>
        <dbReference type="PROSITE-ProRule" id="PRU00303"/>
    </source>
</evidence>
<evidence type="ECO:0000256" key="2">
    <source>
        <dbReference type="SAM" id="MobiDB-lite"/>
    </source>
</evidence>
<evidence type="ECO:0000305" key="3"/>
<feature type="signal peptide" evidence="1">
    <location>
        <begin position="1"/>
        <end position="26"/>
    </location>
</feature>
<feature type="chain" id="PRO_0000013928" description="Uncharacterized protein YidQ">
    <location>
        <begin position="27"/>
        <end position="110"/>
    </location>
</feature>
<feature type="region of interest" description="Disordered" evidence="2">
    <location>
        <begin position="87"/>
        <end position="110"/>
    </location>
</feature>
<comment type="similarity">
    <text evidence="3">To E.coli YceK.</text>
</comment>
<comment type="sequence caution" evidence="3">
    <conflict type="erroneous initiation">
        <sequence resource="EMBL-CDS" id="AAA62040"/>
    </conflict>
    <text>Extended N-terminus.</text>
</comment>